<proteinExistence type="evidence at transcript level"/>
<gene>
    <name type="primary">VWC2L</name>
    <name type="synonym">QtrA-13554</name>
</gene>
<organism>
    <name type="scientific">Macaca fascicularis</name>
    <name type="common">Crab-eating macaque</name>
    <name type="synonym">Cynomolgus monkey</name>
    <dbReference type="NCBI Taxonomy" id="9541"/>
    <lineage>
        <taxon>Eukaryota</taxon>
        <taxon>Metazoa</taxon>
        <taxon>Chordata</taxon>
        <taxon>Craniata</taxon>
        <taxon>Vertebrata</taxon>
        <taxon>Euteleostomi</taxon>
        <taxon>Mammalia</taxon>
        <taxon>Eutheria</taxon>
        <taxon>Euarchontoglires</taxon>
        <taxon>Primates</taxon>
        <taxon>Haplorrhini</taxon>
        <taxon>Catarrhini</taxon>
        <taxon>Cercopithecidae</taxon>
        <taxon>Cercopithecinae</taxon>
        <taxon>Macaca</taxon>
    </lineage>
</organism>
<dbReference type="EMBL" id="AB063096">
    <property type="protein sequence ID" value="BAB60802.1"/>
    <property type="molecule type" value="mRNA"/>
</dbReference>
<dbReference type="STRING" id="9541.ENSMFAP00000009893"/>
<dbReference type="eggNOG" id="ENOG502RAAU">
    <property type="taxonomic scope" value="Eukaryota"/>
</dbReference>
<dbReference type="Proteomes" id="UP000233100">
    <property type="component" value="Unplaced"/>
</dbReference>
<dbReference type="GO" id="GO:0032281">
    <property type="term" value="C:AMPA glutamate receptor complex"/>
    <property type="evidence" value="ECO:0007669"/>
    <property type="project" value="TreeGrafter"/>
</dbReference>
<dbReference type="GO" id="GO:0005615">
    <property type="term" value="C:extracellular space"/>
    <property type="evidence" value="ECO:0007669"/>
    <property type="project" value="TreeGrafter"/>
</dbReference>
<dbReference type="GO" id="GO:0045202">
    <property type="term" value="C:synapse"/>
    <property type="evidence" value="ECO:0007669"/>
    <property type="project" value="UniProtKB-SubCell"/>
</dbReference>
<dbReference type="GO" id="GO:0030514">
    <property type="term" value="P:negative regulation of BMP signaling pathway"/>
    <property type="evidence" value="ECO:0007669"/>
    <property type="project" value="TreeGrafter"/>
</dbReference>
<dbReference type="InterPro" id="IPR042979">
    <property type="entry name" value="VWC2/VWC2L"/>
</dbReference>
<dbReference type="PANTHER" id="PTHR46252">
    <property type="entry name" value="BRORIN FAMILY MEMBER"/>
    <property type="match status" value="1"/>
</dbReference>
<dbReference type="PANTHER" id="PTHR46252:SF2">
    <property type="entry name" value="VON WILLEBRAND FACTOR C DOMAIN-CONTAINING PROTEIN 2-LIKE"/>
    <property type="match status" value="1"/>
</dbReference>
<dbReference type="Pfam" id="PF23333">
    <property type="entry name" value="VWC2L_1st"/>
    <property type="match status" value="1"/>
</dbReference>
<dbReference type="Pfam" id="PF23334">
    <property type="entry name" value="VWC2L_2nd"/>
    <property type="match status" value="1"/>
</dbReference>
<accession>Q95K75</accession>
<reference key="1">
    <citation type="submission" date="2001-06" db="EMBL/GenBank/DDBJ databases">
        <title>Isolation of full-length cDNA clones from macaque brain cDNA libraries.</title>
        <authorList>
            <person name="Osada N."/>
            <person name="Hida M."/>
            <person name="Kusuda J."/>
            <person name="Tanuma R."/>
            <person name="Iseki K."/>
            <person name="Hirai M."/>
            <person name="Terao K."/>
            <person name="Suzuki Y."/>
            <person name="Sugano S."/>
            <person name="Hashimoto K."/>
        </authorList>
    </citation>
    <scope>NUCLEOTIDE SEQUENCE [LARGE SCALE MRNA]</scope>
    <source>
        <tissue>Temporal cortex</tissue>
    </source>
</reference>
<evidence type="ECO:0000250" key="1"/>
<evidence type="ECO:0000255" key="2"/>
<protein>
    <recommendedName>
        <fullName>von Willebrand factor C domain-containing protein 2-like</fullName>
    </recommendedName>
</protein>
<feature type="signal peptide" evidence="2">
    <location>
        <begin position="1"/>
        <end position="21"/>
    </location>
</feature>
<feature type="chain" id="PRO_0000348061" description="von Willebrand factor C domain-containing protein 2-like">
    <location>
        <begin position="22"/>
        <end position="138"/>
    </location>
</feature>
<feature type="domain" description="VWFC">
    <location>
        <begin position="51"/>
        <end position="110"/>
    </location>
</feature>
<keyword id="KW-0217">Developmental protein</keyword>
<keyword id="KW-1185">Reference proteome</keyword>
<keyword id="KW-0964">Secreted</keyword>
<keyword id="KW-0732">Signal</keyword>
<keyword id="KW-0770">Synapse</keyword>
<sequence length="138" mass="15382">MALHIHEACILLLVIPGLVTSAAISHEDYPADEGDQISSNDNLIFDDYRGKGCVDDSGFVYKLGERFFPGHSNCPCVCALDGPVCDQPECPKIHPKCTKVEHNGCCPECKEVKNFCEYHGKNYKILEEFKVCVTLHTY</sequence>
<comment type="function">
    <text evidence="1">May play a role in neurogenesis. May play a role in bone differentiation and matrix mineralization.</text>
</comment>
<comment type="subunit">
    <text evidence="1">Peripherally associated with AMPAR complex. AMPAR complex consists of an inner core made of 4 pore-forming GluA/GRIA proteins (GRIA1, GRIA2, GRIA3 and GRIA4) and 4 major auxiliary subunits arranged in a twofold symmetry. One of the two pairs of distinct binding sites is occupied either by CNIH2, CNIH3 or CACNG2, CACNG3. The other harbors CACNG2, CACNG3, CACNG4, CACNG8 or GSG1L. This inner core of AMPAR complex is complemented by outer core constituents binding directly to the GluA/GRIA proteins at sites distinct from the interaction sites of the inner core constituents. Outer core constituents include at least PRRT1, PRRT2, CKAMP44/SHISA9, FRRS1L and NRN1. The proteins of the inner and outer core serve as a platform for other, more peripherally associated AMPAR constituents, including VWC2L. Alone or in combination, these auxiliary subunits control the gating and pharmacology of the AMPAR complex and profoundly impact their biogenesis and protein processing (By similarity).</text>
</comment>
<comment type="subcellular location">
    <subcellularLocation>
        <location evidence="1">Secreted</location>
    </subcellularLocation>
    <subcellularLocation>
        <location evidence="1">Synapse</location>
    </subcellularLocation>
</comment>
<name>VWC2L_MACFA</name>